<organism>
    <name type="scientific">Escherichia coli O7:K1 (strain IAI39 / ExPEC)</name>
    <dbReference type="NCBI Taxonomy" id="585057"/>
    <lineage>
        <taxon>Bacteria</taxon>
        <taxon>Pseudomonadati</taxon>
        <taxon>Pseudomonadota</taxon>
        <taxon>Gammaproteobacteria</taxon>
        <taxon>Enterobacterales</taxon>
        <taxon>Enterobacteriaceae</taxon>
        <taxon>Escherichia</taxon>
    </lineage>
</organism>
<proteinExistence type="inferred from homology"/>
<evidence type="ECO:0000255" key="1">
    <source>
        <dbReference type="HAMAP-Rule" id="MF_00415"/>
    </source>
</evidence>
<protein>
    <recommendedName>
        <fullName evidence="1">Flagellar L-ring protein</fullName>
    </recommendedName>
    <alternativeName>
        <fullName evidence="1">Basal body L-ring protein</fullName>
    </alternativeName>
</protein>
<reference key="1">
    <citation type="journal article" date="2009" name="PLoS Genet.">
        <title>Organised genome dynamics in the Escherichia coli species results in highly diverse adaptive paths.</title>
        <authorList>
            <person name="Touchon M."/>
            <person name="Hoede C."/>
            <person name="Tenaillon O."/>
            <person name="Barbe V."/>
            <person name="Baeriswyl S."/>
            <person name="Bidet P."/>
            <person name="Bingen E."/>
            <person name="Bonacorsi S."/>
            <person name="Bouchier C."/>
            <person name="Bouvet O."/>
            <person name="Calteau A."/>
            <person name="Chiapello H."/>
            <person name="Clermont O."/>
            <person name="Cruveiller S."/>
            <person name="Danchin A."/>
            <person name="Diard M."/>
            <person name="Dossat C."/>
            <person name="Karoui M.E."/>
            <person name="Frapy E."/>
            <person name="Garry L."/>
            <person name="Ghigo J.M."/>
            <person name="Gilles A.M."/>
            <person name="Johnson J."/>
            <person name="Le Bouguenec C."/>
            <person name="Lescat M."/>
            <person name="Mangenot S."/>
            <person name="Martinez-Jehanne V."/>
            <person name="Matic I."/>
            <person name="Nassif X."/>
            <person name="Oztas S."/>
            <person name="Petit M.A."/>
            <person name="Pichon C."/>
            <person name="Rouy Z."/>
            <person name="Ruf C.S."/>
            <person name="Schneider D."/>
            <person name="Tourret J."/>
            <person name="Vacherie B."/>
            <person name="Vallenet D."/>
            <person name="Medigue C."/>
            <person name="Rocha E.P.C."/>
            <person name="Denamur E."/>
        </authorList>
    </citation>
    <scope>NUCLEOTIDE SEQUENCE [LARGE SCALE GENOMIC DNA]</scope>
    <source>
        <strain>IAI39 / ExPEC</strain>
    </source>
</reference>
<gene>
    <name evidence="1" type="primary">flgH</name>
    <name type="ordered locus">ECIAI39_2084</name>
</gene>
<dbReference type="EMBL" id="CU928164">
    <property type="protein sequence ID" value="CAR18211.1"/>
    <property type="molecule type" value="Genomic_DNA"/>
</dbReference>
<dbReference type="RefSeq" id="WP_012602386.1">
    <property type="nucleotide sequence ID" value="NC_011750.1"/>
</dbReference>
<dbReference type="RefSeq" id="YP_002408047.1">
    <property type="nucleotide sequence ID" value="NC_011750.1"/>
</dbReference>
<dbReference type="SMR" id="B7NL55"/>
<dbReference type="STRING" id="585057.ECIAI39_2084"/>
<dbReference type="KEGG" id="ect:ECIAI39_2084"/>
<dbReference type="PATRIC" id="fig|585057.6.peg.2166"/>
<dbReference type="HOGENOM" id="CLU_069313_0_0_6"/>
<dbReference type="Proteomes" id="UP000000749">
    <property type="component" value="Chromosome"/>
</dbReference>
<dbReference type="GO" id="GO:0009427">
    <property type="term" value="C:bacterial-type flagellum basal body, distal rod, L ring"/>
    <property type="evidence" value="ECO:0007669"/>
    <property type="project" value="InterPro"/>
</dbReference>
<dbReference type="GO" id="GO:0009279">
    <property type="term" value="C:cell outer membrane"/>
    <property type="evidence" value="ECO:0007669"/>
    <property type="project" value="UniProtKB-SubCell"/>
</dbReference>
<dbReference type="GO" id="GO:0003774">
    <property type="term" value="F:cytoskeletal motor activity"/>
    <property type="evidence" value="ECO:0007669"/>
    <property type="project" value="InterPro"/>
</dbReference>
<dbReference type="GO" id="GO:0071973">
    <property type="term" value="P:bacterial-type flagellum-dependent cell motility"/>
    <property type="evidence" value="ECO:0007669"/>
    <property type="project" value="InterPro"/>
</dbReference>
<dbReference type="HAMAP" id="MF_00415">
    <property type="entry name" value="FlgH"/>
    <property type="match status" value="1"/>
</dbReference>
<dbReference type="InterPro" id="IPR000527">
    <property type="entry name" value="Flag_Lring"/>
</dbReference>
<dbReference type="NCBIfam" id="NF001301">
    <property type="entry name" value="PRK00249.1-1"/>
    <property type="match status" value="1"/>
</dbReference>
<dbReference type="PANTHER" id="PTHR34933">
    <property type="entry name" value="FLAGELLAR L-RING PROTEIN"/>
    <property type="match status" value="1"/>
</dbReference>
<dbReference type="PANTHER" id="PTHR34933:SF3">
    <property type="entry name" value="FLAGELLAR L-RING PROTEIN"/>
    <property type="match status" value="1"/>
</dbReference>
<dbReference type="Pfam" id="PF02107">
    <property type="entry name" value="FlgH"/>
    <property type="match status" value="1"/>
</dbReference>
<dbReference type="PRINTS" id="PR01008">
    <property type="entry name" value="FLGLRINGFLGH"/>
</dbReference>
<dbReference type="PROSITE" id="PS51257">
    <property type="entry name" value="PROKAR_LIPOPROTEIN"/>
    <property type="match status" value="1"/>
</dbReference>
<name>FLGH_ECO7I</name>
<sequence>MQKNAAHTYAISSLLVLSLTGCAWIPSTPLVQGATSAQPVPGPAPVANGSIFQSAQPINYGYQPLFEDRRPRNIGDTLTIVLQENVSASKSSSANASRDGKTNFGFDTVPRYLQGLFGNARADVEASGGNTFNGKGGANASNTFSGTLTVTVDQVLVNGNLHVVGEKQIAINQGTEFIRFSGVVNPRTISGSNTVPSTQVADARIEYVGNGYINEAQNMGWLQRFFLNLSPM</sequence>
<keyword id="KW-0975">Bacterial flagellum</keyword>
<keyword id="KW-0998">Cell outer membrane</keyword>
<keyword id="KW-0449">Lipoprotein</keyword>
<keyword id="KW-0472">Membrane</keyword>
<keyword id="KW-0564">Palmitate</keyword>
<keyword id="KW-0732">Signal</keyword>
<comment type="function">
    <text evidence="1">Assembles around the rod to form the L-ring and probably protects the motor/basal body from shearing forces during rotation.</text>
</comment>
<comment type="subunit">
    <text evidence="1">The basal body constitutes a major portion of the flagellar organelle and consists of four rings (L,P,S, and M) mounted on a central rod.</text>
</comment>
<comment type="subcellular location">
    <subcellularLocation>
        <location evidence="1">Cell outer membrane</location>
        <topology evidence="1">Lipid-anchor</topology>
    </subcellularLocation>
    <subcellularLocation>
        <location evidence="1">Bacterial flagellum basal body</location>
    </subcellularLocation>
</comment>
<comment type="similarity">
    <text evidence="1">Belongs to the FlgH family.</text>
</comment>
<feature type="signal peptide" evidence="1">
    <location>
        <begin position="1"/>
        <end position="21"/>
    </location>
</feature>
<feature type="chain" id="PRO_1000123946" description="Flagellar L-ring protein">
    <location>
        <begin position="22"/>
        <end position="232"/>
    </location>
</feature>
<feature type="lipid moiety-binding region" description="N-palmitoyl cysteine" evidence="1">
    <location>
        <position position="22"/>
    </location>
</feature>
<feature type="lipid moiety-binding region" description="S-diacylglycerol cysteine" evidence="1">
    <location>
        <position position="22"/>
    </location>
</feature>
<accession>B7NL55</accession>